<keyword id="KW-0131">Cell cycle</keyword>
<keyword id="KW-0132">Cell division</keyword>
<keyword id="KW-1017">Isopeptide bond</keyword>
<keyword id="KW-0498">Mitosis</keyword>
<keyword id="KW-0539">Nucleus</keyword>
<keyword id="KW-0597">Phosphoprotein</keyword>
<keyword id="KW-1185">Reference proteome</keyword>
<keyword id="KW-0832">Ubl conjugation</keyword>
<sequence length="1011" mass="110998">MDTCSQESEPLQTKESPINNAGKTPLVLGNGKLVTPHKQAAEMTPNCYTSETFKSPLNFSTVTVEQLGISPESFVNNSSGKSSPYLKKSRRRSTVGLRGLPETNHLIRFVAEQRSLKNASLTQTSPFQGSPALYRNVYSLREQMSAFHLAFNSIKENEKMTDCPEFSEAEGVFKTRGSTKKESLGECQLSEFSAQSSSKRRRLSSPSSSDVNLTDAVDLQACGVNMAACPSTDMKCAVETCAGLSQKSSASGLNLQCGCLMNESPLLSELTEASSGIQDAASVEERGSNDAVSVDKCTEVSTDTAPEVRSLVTPLCQKDLPSSKTFVLRSVLKKPAVKLCVESLQEHLDNLYNDETCPSLTSSLANSCKEQTAALPNTKKRKRVTFGEDLSPEVLDESLPANTPLRKGQTPVRKKDLSSLSPPLLEQSPVPEWLPQPNFDDKEENLENIEPLQVSFAVLSSLNMSSIAETLSGTDTSASSSNHENIAPFRVGRATRTSDRRSKLISFSQESVCNLLNAEAQPCKEKKTNRRKSQESKHADKVLPRKNRVLKGCKKKKGKGKRKGVQKSLYGERDLASKKPLLSPIPELPEVSETPLVGSLVRRTYPDDFNSNGKFEEMMLPKRENLLSQDPEDWQVIQGFNKDNASESCSSDMKSSSSFSNATFEQDANINSIEMDENENIPKAITLESENERKTGTECENSHISCTLVTVTPVVSDNPKPDFPLQSQELSAAGQNVENLFQIVKISEDMNIKCEKQSGFSVIPEDKLQTEHLIPDSQKECDCSEDVLTDQRKVSKSQGEDLGRNSAASCSGVSDRERKYRGHSVGGSDGPGLHLERTNNLQTSYSMSSLVEISLENSELCKDLSDSIEQSLQRTKSETKVRRSLRLQKSLEREGGLVWVSPPPPPASCTSQRTKRRTVGTLDSRGFEPVSSRQDPCTLPSTSSEENGEGFTAAPDASLPGKRRRRSFCTSTLANPKSTTQSRGCKRRSFLGQKRENTLQETSRESDLSEN</sequence>
<proteinExistence type="evidence at transcript level"/>
<reference key="1">
    <citation type="submission" date="2006-02" db="EMBL/GenBank/DDBJ databases">
        <authorList>
            <consortium name="NIH - Mammalian Gene Collection (MGC) project"/>
        </authorList>
    </citation>
    <scope>NUCLEOTIDE SEQUENCE [LARGE SCALE MRNA]</scope>
    <source>
        <strain>Hereford</strain>
        <tissue>Testis</tissue>
    </source>
</reference>
<gene>
    <name type="primary">CDCA2</name>
</gene>
<accession>Q29RT4</accession>
<organism>
    <name type="scientific">Bos taurus</name>
    <name type="common">Bovine</name>
    <dbReference type="NCBI Taxonomy" id="9913"/>
    <lineage>
        <taxon>Eukaryota</taxon>
        <taxon>Metazoa</taxon>
        <taxon>Chordata</taxon>
        <taxon>Craniata</taxon>
        <taxon>Vertebrata</taxon>
        <taxon>Euteleostomi</taxon>
        <taxon>Mammalia</taxon>
        <taxon>Eutheria</taxon>
        <taxon>Laurasiatheria</taxon>
        <taxon>Artiodactyla</taxon>
        <taxon>Ruminantia</taxon>
        <taxon>Pecora</taxon>
        <taxon>Bovidae</taxon>
        <taxon>Bovinae</taxon>
        <taxon>Bos</taxon>
    </lineage>
</organism>
<protein>
    <recommendedName>
        <fullName>Cell division cycle-associated protein 2</fullName>
    </recommendedName>
</protein>
<comment type="function">
    <text evidence="1">Regulator of chromosome structure during mitosis required for condensin-depleted chromosomes to retain their compact architecture through anaphase. Acts by mediating the recruitment of phopsphatase PP1-gamma subunit (PPP1CC) to chromatin at anaphase and into the following interphase. At anaphase onset, its association with chromatin targets a pool of PPP1CC to dephosphorylate substrates (By similarity).</text>
</comment>
<comment type="subunit">
    <text evidence="1">Interacts with PPP1CC.</text>
</comment>
<comment type="subcellular location">
    <subcellularLocation>
        <location evidence="1">Nucleus</location>
    </subcellularLocation>
    <text evidence="1">Excluded from the nucleolus. Present in nucleoplasm throughout the G1, S and G2 stages of the cell cycle. During M phase, it becomes diffuse throughout the cell as the nuclear membrane breaks down, and faintly accumulates later on metaphase chromatin. As the cell progresses to anaphase, it accumulates on chromatin (By similarity).</text>
</comment>
<comment type="PTM">
    <text evidence="1">Phosphorylated by CDK1. May regulate its subcellular location (By similarity).</text>
</comment>
<feature type="chain" id="PRO_0000287694" description="Cell division cycle-associated protein 2">
    <location>
        <begin position="1"/>
        <end position="1011"/>
    </location>
</feature>
<feature type="domain" description="PP1-binding" evidence="2">
    <location>
        <begin position="380"/>
        <end position="440"/>
    </location>
</feature>
<feature type="region of interest" description="Disordered" evidence="3">
    <location>
        <begin position="1"/>
        <end position="26"/>
    </location>
</feature>
<feature type="region of interest" description="Disordered" evidence="3">
    <location>
        <begin position="395"/>
        <end position="438"/>
    </location>
</feature>
<feature type="region of interest" description="Disordered" evidence="3">
    <location>
        <begin position="522"/>
        <end position="544"/>
    </location>
</feature>
<feature type="region of interest" description="Disordered" evidence="3">
    <location>
        <begin position="790"/>
        <end position="835"/>
    </location>
</feature>
<feature type="region of interest" description="Disordered" evidence="3">
    <location>
        <begin position="896"/>
        <end position="1011"/>
    </location>
</feature>
<feature type="compositionally biased region" description="Polar residues" evidence="3">
    <location>
        <begin position="1"/>
        <end position="22"/>
    </location>
</feature>
<feature type="compositionally biased region" description="Low complexity" evidence="3">
    <location>
        <begin position="418"/>
        <end position="431"/>
    </location>
</feature>
<feature type="compositionally biased region" description="Basic and acidic residues" evidence="3">
    <location>
        <begin position="522"/>
        <end position="543"/>
    </location>
</feature>
<feature type="compositionally biased region" description="Basic and acidic residues" evidence="3">
    <location>
        <begin position="790"/>
        <end position="803"/>
    </location>
</feature>
<feature type="compositionally biased region" description="Polar residues" evidence="3">
    <location>
        <begin position="931"/>
        <end position="945"/>
    </location>
</feature>
<feature type="compositionally biased region" description="Polar residues" evidence="3">
    <location>
        <begin position="968"/>
        <end position="983"/>
    </location>
</feature>
<feature type="compositionally biased region" description="Basic and acidic residues" evidence="3">
    <location>
        <begin position="993"/>
        <end position="1011"/>
    </location>
</feature>
<feature type="modified residue" description="Phosphoserine" evidence="2">
    <location>
        <position position="125"/>
    </location>
</feature>
<feature type="modified residue" description="Phosphoserine" evidence="2">
    <location>
        <position position="130"/>
    </location>
</feature>
<feature type="modified residue" description="Phosphoserine" evidence="2">
    <location>
        <position position="209"/>
    </location>
</feature>
<feature type="modified residue" description="Phosphoserine" evidence="2">
    <location>
        <position position="293"/>
    </location>
</feature>
<feature type="modified residue" description="Phosphoserine" evidence="2">
    <location>
        <position position="310"/>
    </location>
</feature>
<feature type="modified residue" description="Phosphothreonine" evidence="2">
    <location>
        <position position="313"/>
    </location>
</feature>
<feature type="modified residue" description="Phosphoserine" evidence="2">
    <location>
        <position position="391"/>
    </location>
</feature>
<feature type="modified residue" description="Phosphoserine" evidence="2">
    <location>
        <position position="398"/>
    </location>
</feature>
<feature type="modified residue" description="Phosphothreonine" evidence="2">
    <location>
        <position position="403"/>
    </location>
</feature>
<feature type="modified residue" description="Phosphoserine" evidence="2">
    <location>
        <position position="428"/>
    </location>
</feature>
<feature type="modified residue" description="Phosphoserine" evidence="2">
    <location>
        <position position="583"/>
    </location>
</feature>
<feature type="modified residue" description="Phosphoserine" evidence="2">
    <location>
        <position position="702"/>
    </location>
</feature>
<feature type="modified residue" description="Phosphoserine" evidence="2">
    <location>
        <position position="747"/>
    </location>
</feature>
<feature type="modified residue" description="Phosphoserine" evidence="2">
    <location>
        <position position="967"/>
    </location>
</feature>
<feature type="cross-link" description="Glycyl lysine isopeptide (Lys-Gly) (interchain with G-Cter in SUMO2)" evidence="2">
    <location>
        <position position="753"/>
    </location>
</feature>
<evidence type="ECO:0000250" key="1"/>
<evidence type="ECO:0000250" key="2">
    <source>
        <dbReference type="UniProtKB" id="Q69YH5"/>
    </source>
</evidence>
<evidence type="ECO:0000256" key="3">
    <source>
        <dbReference type="SAM" id="MobiDB-lite"/>
    </source>
</evidence>
<dbReference type="EMBL" id="BC114031">
    <property type="protein sequence ID" value="AAI14032.1"/>
    <property type="molecule type" value="mRNA"/>
</dbReference>
<dbReference type="RefSeq" id="NP_001039659.1">
    <property type="nucleotide sequence ID" value="NM_001046194.2"/>
</dbReference>
<dbReference type="SMR" id="Q29RT4"/>
<dbReference type="FunCoup" id="Q29RT4">
    <property type="interactions" value="412"/>
</dbReference>
<dbReference type="STRING" id="9913.ENSBTAP00000003573"/>
<dbReference type="PaxDb" id="9913-ENSBTAP00000054520"/>
<dbReference type="GeneID" id="515287"/>
<dbReference type="KEGG" id="bta:515287"/>
<dbReference type="CTD" id="157313"/>
<dbReference type="eggNOG" id="ENOG502S079">
    <property type="taxonomic scope" value="Eukaryota"/>
</dbReference>
<dbReference type="InParanoid" id="Q29RT4"/>
<dbReference type="OrthoDB" id="9947694at2759"/>
<dbReference type="Proteomes" id="UP000009136">
    <property type="component" value="Unplaced"/>
</dbReference>
<dbReference type="GO" id="GO:0005694">
    <property type="term" value="C:chromosome"/>
    <property type="evidence" value="ECO:0000318"/>
    <property type="project" value="GO_Central"/>
</dbReference>
<dbReference type="GO" id="GO:0005634">
    <property type="term" value="C:nucleus"/>
    <property type="evidence" value="ECO:0000318"/>
    <property type="project" value="GO_Central"/>
</dbReference>
<dbReference type="GO" id="GO:0051301">
    <property type="term" value="P:cell division"/>
    <property type="evidence" value="ECO:0007669"/>
    <property type="project" value="UniProtKB-KW"/>
</dbReference>
<dbReference type="GO" id="GO:0007088">
    <property type="term" value="P:regulation of mitotic nuclear division"/>
    <property type="evidence" value="ECO:0000318"/>
    <property type="project" value="GO_Central"/>
</dbReference>
<dbReference type="InterPro" id="IPR029334">
    <property type="entry name" value="PP1-bd"/>
</dbReference>
<dbReference type="PANTHER" id="PTHR21603">
    <property type="entry name" value="ANTIGEN KI-67-LIKE PROTEIN"/>
    <property type="match status" value="1"/>
</dbReference>
<dbReference type="PANTHER" id="PTHR21603:SF16">
    <property type="entry name" value="CELL DIVISION CYCLE-ASSOCIATED PROTEIN 2"/>
    <property type="match status" value="1"/>
</dbReference>
<dbReference type="Pfam" id="PF15276">
    <property type="entry name" value="PP1_bind"/>
    <property type="match status" value="1"/>
</dbReference>
<name>CDCA2_BOVIN</name>